<keyword id="KW-0175">Coiled coil</keyword>
<keyword id="KW-0496">Mitochondrion</keyword>
<keyword id="KW-0687">Ribonucleoprotein</keyword>
<keyword id="KW-0732">Signal</keyword>
<keyword id="KW-0749">Sporulation</keyword>
<organism>
    <name type="scientific">Saccharomyces cerevisiae (strain JAY291)</name>
    <name type="common">Baker's yeast</name>
    <dbReference type="NCBI Taxonomy" id="574961"/>
    <lineage>
        <taxon>Eukaryota</taxon>
        <taxon>Fungi</taxon>
        <taxon>Dikarya</taxon>
        <taxon>Ascomycota</taxon>
        <taxon>Saccharomycotina</taxon>
        <taxon>Saccharomycetes</taxon>
        <taxon>Saccharomycetales</taxon>
        <taxon>Saccharomycetaceae</taxon>
        <taxon>Saccharomyces</taxon>
    </lineage>
</organism>
<name>SHE10_YEAS2</name>
<dbReference type="EMBL" id="ACFL01000079">
    <property type="protein sequence ID" value="EEU07494.1"/>
    <property type="molecule type" value="Genomic_DNA"/>
</dbReference>
<dbReference type="SMR" id="C7GNX5"/>
<dbReference type="OrthoDB" id="40211at4893"/>
<dbReference type="Proteomes" id="UP000008073">
    <property type="component" value="Unassembled WGS sequence"/>
</dbReference>
<dbReference type="GO" id="GO:0005739">
    <property type="term" value="C:mitochondrion"/>
    <property type="evidence" value="ECO:0007669"/>
    <property type="project" value="UniProtKB-SubCell"/>
</dbReference>
<dbReference type="GO" id="GO:1990904">
    <property type="term" value="C:ribonucleoprotein complex"/>
    <property type="evidence" value="ECO:0007669"/>
    <property type="project" value="UniProtKB-KW"/>
</dbReference>
<dbReference type="GO" id="GO:0030435">
    <property type="term" value="P:sporulation resulting in formation of a cellular spore"/>
    <property type="evidence" value="ECO:0007669"/>
    <property type="project" value="UniProtKB-KW"/>
</dbReference>
<proteinExistence type="inferred from homology"/>
<accession>C7GNX5</accession>
<feature type="signal peptide" evidence="2">
    <location>
        <begin position="1"/>
        <end position="23"/>
    </location>
</feature>
<feature type="chain" id="PRO_0000408912" description="Outer spore wall assembly protein SHE10">
    <location>
        <begin position="24"/>
        <end position="577"/>
    </location>
</feature>
<feature type="region of interest" description="Disordered" evidence="3">
    <location>
        <begin position="525"/>
        <end position="577"/>
    </location>
</feature>
<feature type="coiled-coil region" evidence="2">
    <location>
        <begin position="379"/>
        <end position="416"/>
    </location>
</feature>
<feature type="coiled-coil region" evidence="2">
    <location>
        <begin position="513"/>
        <end position="561"/>
    </location>
</feature>
<feature type="compositionally biased region" description="Basic and acidic residues" evidence="3">
    <location>
        <begin position="525"/>
        <end position="545"/>
    </location>
</feature>
<feature type="compositionally biased region" description="Low complexity" evidence="3">
    <location>
        <begin position="562"/>
        <end position="577"/>
    </location>
</feature>
<reference key="1">
    <citation type="journal article" date="2009" name="Genome Res.">
        <title>Genome structure of a Saccharomyces cerevisiae strain widely used in bioethanol production.</title>
        <authorList>
            <person name="Argueso J.L."/>
            <person name="Carazzolle M.F."/>
            <person name="Mieczkowski P.A."/>
            <person name="Duarte F.M."/>
            <person name="Netto O.V.C."/>
            <person name="Missawa S.K."/>
            <person name="Galzerani F."/>
            <person name="Costa G.G.L."/>
            <person name="Vidal R.O."/>
            <person name="Noronha M.F."/>
            <person name="Dominska M."/>
            <person name="Andrietta M.G.S."/>
            <person name="Andrietta S.R."/>
            <person name="Cunha A.F."/>
            <person name="Gomes L.H."/>
            <person name="Tavares F.C.A."/>
            <person name="Alcarde A.R."/>
            <person name="Dietrich F.S."/>
            <person name="McCusker J.H."/>
            <person name="Petes T.D."/>
            <person name="Pereira G.A.G."/>
        </authorList>
    </citation>
    <scope>NUCLEOTIDE SEQUENCE [LARGE SCALE GENOMIC DNA]</scope>
    <source>
        <strain>JAY291</strain>
    </source>
</reference>
<protein>
    <recommendedName>
        <fullName evidence="1">Outer spore wall assembly protein SHE10</fullName>
    </recommendedName>
    <alternativeName>
        <fullName evidence="1">Sensitivity to high expression protein 10</fullName>
    </alternativeName>
</protein>
<comment type="function">
    <text evidence="1">Involved in spore wall assembly. May be a component of the mitochondrial RNase MRP (MtMRP), a ribonucleoprotein endoribonuclease involved in the cleaving RNA transcripts to generate primers for DNA replication in mitochondria.</text>
</comment>
<comment type="subunit">
    <text evidence="1">Component of the mitochondria-localized RNase mitochondrial RNA-processing (RNase MRP) composed of one single RNA encoded by the NME1 gene and at least 31 proteins. Absent in the nucleus-localized RNase MRP (NuMRP).</text>
</comment>
<comment type="subcellular location">
    <subcellularLocation>
        <location evidence="1">Mitochondrion</location>
    </subcellularLocation>
</comment>
<comment type="similarity">
    <text evidence="4">Belongs to the SHE10 family.</text>
</comment>
<gene>
    <name evidence="1" type="primary">SHE10</name>
    <name type="ORF">C1Q_02013</name>
</gene>
<sequence>MGKLIKLITTLTVLVSLLQYCCEFNSGSISCERTQTLCHYTNPRVWNTYFSRNCELYKNKVSPGFDIVARKYDTAVKPVIDDATVKVNKVAIQPAFKVIHSQCKKWNCGKYYQLGRSPMVKTRRFFFAKYNAFVKPNLDKFFTAEFRSHLKERILKYKNIGHYYFTITSRCIKSKYDFTVGNTEEKLMGKFKNKDTHGIHGSVTREPSSEDMVLTVSTMESDEEELTTTSTQTVVETITLDQEEASAVANHAHDDEASTDVEGSTDVNVNEQALLQEDFDMWSETILQKTQDVIQLFEKDVSKYINGKLVEEANHFKAKFQSLDDKSKKFFSKISLAINDIECVEGIDSETGKKIFFDKSGSTEISQYITRELVREYFNETRSTLDELTNAMEKDLSEITDEIEKKVNAIREENVEVFEEWGDIIVNEWSKRMAYVDVINAHMGADDDTTLDEEKAKSSVNWKKFLKGKKQIIESRDKLAHHSADLSRVNAFRQKVQKKILSFTQESGEFLYILRSKANLQFQERERKERERKEREKAAAEEFQRQQELLLQQEEEDEEDVSYTSTSTITTTTTMTL</sequence>
<evidence type="ECO:0000250" key="1">
    <source>
        <dbReference type="UniProtKB" id="P53075"/>
    </source>
</evidence>
<evidence type="ECO:0000255" key="2"/>
<evidence type="ECO:0000256" key="3">
    <source>
        <dbReference type="SAM" id="MobiDB-lite"/>
    </source>
</evidence>
<evidence type="ECO:0000305" key="4"/>